<name>ATG16_PICAN</name>
<gene>
    <name type="primary">ATG16</name>
</gene>
<evidence type="ECO:0000250" key="1"/>
<evidence type="ECO:0000250" key="2">
    <source>
        <dbReference type="UniProtKB" id="Q03818"/>
    </source>
</evidence>
<evidence type="ECO:0000255" key="3"/>
<evidence type="ECO:0000269" key="4">
    <source>
    </source>
</evidence>
<evidence type="ECO:0000305" key="5"/>
<accession>A7KAK0</accession>
<organism>
    <name type="scientific">Pichia angusta</name>
    <name type="common">Yeast</name>
    <name type="synonym">Hansenula polymorpha</name>
    <dbReference type="NCBI Taxonomy" id="870730"/>
    <lineage>
        <taxon>Eukaryota</taxon>
        <taxon>Fungi</taxon>
        <taxon>Dikarya</taxon>
        <taxon>Ascomycota</taxon>
        <taxon>Saccharomycotina</taxon>
        <taxon>Pichiomycetes</taxon>
        <taxon>Pichiales</taxon>
        <taxon>Pichiaceae</taxon>
        <taxon>Ogataea</taxon>
    </lineage>
</organism>
<feature type="chain" id="PRO_0000317975" description="Autophagy-related protein 16">
    <location>
        <begin position="1"/>
        <end position="188"/>
    </location>
</feature>
<feature type="coiled-coil region" evidence="3">
    <location>
        <begin position="27"/>
        <end position="185"/>
    </location>
</feature>
<protein>
    <recommendedName>
        <fullName>Autophagy-related protein 16</fullName>
    </recommendedName>
</protein>
<reference key="1">
    <citation type="journal article" date="2007" name="Autophagy">
        <title>ATG genes involved in non-selective autophagy are conserved from yeast to man, but the selective Cvt and pexophagy pathways also require organism-specific genes.</title>
        <authorList>
            <person name="Meijer W.H."/>
            <person name="van der Klei I.J."/>
            <person name="Veenhuis M."/>
            <person name="Kiel J.A.K.W."/>
        </authorList>
    </citation>
    <scope>NUCLEOTIDE SEQUENCE [GENOMIC DNA]</scope>
    <scope>FUNCTION</scope>
    <source>
        <strain>ATCC 34438 / CBS 4732 / DSM 70277 / JCM 3621 / NBRC 1476 / NRRL Y-5445</strain>
    </source>
</reference>
<proteinExistence type="inferred from homology"/>
<sequence length="188" mass="21924">MSWKNDLLAKLAQRDKSMETQKDVFLSFQFLSTRIASLERQLDTVQRDDSKKTVLDLLGEIDQLKQKLDLAEDSLKHETAKNKELVKELSTVKNNLNILTDGYKKLQERHLRLQEESKIKFQNLESLNDDILSLNIENNLLNDRMAKLKQENESLIERWMKRVKQEAEVLNDANEALSRSEKSLKPEG</sequence>
<dbReference type="EMBL" id="EF107722">
    <property type="protein sequence ID" value="ABO31060.1"/>
    <property type="molecule type" value="Genomic_DNA"/>
</dbReference>
<dbReference type="SMR" id="A7KAK0"/>
<dbReference type="PhylomeDB" id="A7KAK0"/>
<dbReference type="GO" id="GO:0034045">
    <property type="term" value="C:phagophore assembly site membrane"/>
    <property type="evidence" value="ECO:0007669"/>
    <property type="project" value="UniProtKB-SubCell"/>
</dbReference>
<dbReference type="GO" id="GO:0006914">
    <property type="term" value="P:autophagy"/>
    <property type="evidence" value="ECO:0007669"/>
    <property type="project" value="UniProtKB-KW"/>
</dbReference>
<dbReference type="GO" id="GO:0015031">
    <property type="term" value="P:protein transport"/>
    <property type="evidence" value="ECO:0007669"/>
    <property type="project" value="UniProtKB-KW"/>
</dbReference>
<dbReference type="CDD" id="cd22887">
    <property type="entry name" value="Atg16_CCD"/>
    <property type="match status" value="1"/>
</dbReference>
<dbReference type="Gene3D" id="1.20.5.170">
    <property type="match status" value="1"/>
</dbReference>
<dbReference type="InterPro" id="IPR013923">
    <property type="entry name" value="Autophagy-rel_prot_16_dom"/>
</dbReference>
<dbReference type="Pfam" id="PF08614">
    <property type="entry name" value="ATG16"/>
    <property type="match status" value="1"/>
</dbReference>
<comment type="function">
    <text evidence="1 4">Stabilizes the ATG5-ATG12 conjugate which is necessary for autophagy. The ATG5-ATG12/ATG16 complex is required for efficient promotion of ATG8-conjugation to phosphatidylethanolamine and ATG8 localization to the pre-autophagosomal structure (PAS). Also recruits ATG3 to the PAS. Involved in endoplasmic reticulum-specific autophagic process and is essential for the survival of cells subjected to severe ER stress (By similarity).</text>
</comment>
<comment type="subunit">
    <text evidence="1">Homodimer (By similarity). Part of the ATG5-ATG12/ATG16 complex. Several units of each may be present in this complex (By similarity).</text>
</comment>
<comment type="subcellular location">
    <subcellularLocation>
        <location evidence="2">Preautophagosomal structure membrane</location>
        <topology evidence="2">Peripheral membrane protein</topology>
    </subcellularLocation>
</comment>
<comment type="similarity">
    <text evidence="5">Belongs to the ATG16 family.</text>
</comment>
<keyword id="KW-0072">Autophagy</keyword>
<keyword id="KW-0175">Coiled coil</keyword>
<keyword id="KW-0472">Membrane</keyword>
<keyword id="KW-0653">Protein transport</keyword>
<keyword id="KW-0813">Transport</keyword>